<keyword id="KW-0408">Iron</keyword>
<keyword id="KW-0411">Iron-sulfur</keyword>
<keyword id="KW-0479">Metal-binding</keyword>
<organism>
    <name type="scientific">Xanthomonas oryzae pv. oryzae (strain MAFF 311018)</name>
    <dbReference type="NCBI Taxonomy" id="342109"/>
    <lineage>
        <taxon>Bacteria</taxon>
        <taxon>Pseudomonadati</taxon>
        <taxon>Pseudomonadota</taxon>
        <taxon>Gammaproteobacteria</taxon>
        <taxon>Lysobacterales</taxon>
        <taxon>Lysobacteraceae</taxon>
        <taxon>Xanthomonas</taxon>
    </lineage>
</organism>
<name>ERPA_XANOM</name>
<sequence>MSTLVSLPTAAPAPDYQSIDRPLHFSVAAAAKVRELIQEEGNADLALRVYIQGGGCSGFQYGFEFDENRAEDDLAVVTDGVTLLVDPLSLQYLMGAEVDYTESLTGAQFVIRNPNAKTTCGCGSSFSV</sequence>
<comment type="function">
    <text evidence="1">Required for insertion of 4Fe-4S clusters for at least IspG.</text>
</comment>
<comment type="cofactor">
    <cofactor evidence="1">
        <name>iron-sulfur cluster</name>
        <dbReference type="ChEBI" id="CHEBI:30408"/>
    </cofactor>
    <text evidence="1">Binds 1 iron-sulfur cluster per subunit.</text>
</comment>
<comment type="subunit">
    <text evidence="1">Homodimer.</text>
</comment>
<comment type="similarity">
    <text evidence="1">Belongs to the HesB/IscA family.</text>
</comment>
<accession>Q2P884</accession>
<proteinExistence type="inferred from homology"/>
<evidence type="ECO:0000255" key="1">
    <source>
        <dbReference type="HAMAP-Rule" id="MF_01380"/>
    </source>
</evidence>
<protein>
    <recommendedName>
        <fullName evidence="1">Iron-sulfur cluster insertion protein ErpA</fullName>
    </recommendedName>
</protein>
<dbReference type="EMBL" id="AP008229">
    <property type="protein sequence ID" value="BAE67243.1"/>
    <property type="molecule type" value="Genomic_DNA"/>
</dbReference>
<dbReference type="RefSeq" id="WP_011407463.1">
    <property type="nucleotide sequence ID" value="NC_007705.1"/>
</dbReference>
<dbReference type="SMR" id="Q2P884"/>
<dbReference type="KEGG" id="xom:XOO0488"/>
<dbReference type="HOGENOM" id="CLU_069054_5_3_6"/>
<dbReference type="GO" id="GO:0005829">
    <property type="term" value="C:cytosol"/>
    <property type="evidence" value="ECO:0007669"/>
    <property type="project" value="TreeGrafter"/>
</dbReference>
<dbReference type="GO" id="GO:0051537">
    <property type="term" value="F:2 iron, 2 sulfur cluster binding"/>
    <property type="evidence" value="ECO:0007669"/>
    <property type="project" value="TreeGrafter"/>
</dbReference>
<dbReference type="GO" id="GO:0051539">
    <property type="term" value="F:4 iron, 4 sulfur cluster binding"/>
    <property type="evidence" value="ECO:0007669"/>
    <property type="project" value="TreeGrafter"/>
</dbReference>
<dbReference type="GO" id="GO:0005506">
    <property type="term" value="F:iron ion binding"/>
    <property type="evidence" value="ECO:0007669"/>
    <property type="project" value="UniProtKB-UniRule"/>
</dbReference>
<dbReference type="GO" id="GO:0016226">
    <property type="term" value="P:iron-sulfur cluster assembly"/>
    <property type="evidence" value="ECO:0007669"/>
    <property type="project" value="UniProtKB-UniRule"/>
</dbReference>
<dbReference type="FunFam" id="2.60.300.12:FF:000002">
    <property type="entry name" value="Iron-sulfur cluster insertion protein ErpA"/>
    <property type="match status" value="1"/>
</dbReference>
<dbReference type="Gene3D" id="2.60.300.12">
    <property type="entry name" value="HesB-like domain"/>
    <property type="match status" value="1"/>
</dbReference>
<dbReference type="HAMAP" id="MF_01380">
    <property type="entry name" value="Fe_S_insert_ErpA"/>
    <property type="match status" value="1"/>
</dbReference>
<dbReference type="InterPro" id="IPR000361">
    <property type="entry name" value="FeS_biogenesis"/>
</dbReference>
<dbReference type="InterPro" id="IPR016092">
    <property type="entry name" value="FeS_cluster_insertion"/>
</dbReference>
<dbReference type="InterPro" id="IPR017870">
    <property type="entry name" value="FeS_cluster_insertion_CS"/>
</dbReference>
<dbReference type="InterPro" id="IPR023063">
    <property type="entry name" value="FeS_cluster_insertion_RrpA"/>
</dbReference>
<dbReference type="InterPro" id="IPR035903">
    <property type="entry name" value="HesB-like_dom_sf"/>
</dbReference>
<dbReference type="NCBIfam" id="TIGR00049">
    <property type="entry name" value="iron-sulfur cluster assembly accessory protein"/>
    <property type="match status" value="1"/>
</dbReference>
<dbReference type="NCBIfam" id="NF010147">
    <property type="entry name" value="PRK13623.1"/>
    <property type="match status" value="1"/>
</dbReference>
<dbReference type="PANTHER" id="PTHR43011">
    <property type="entry name" value="IRON-SULFUR CLUSTER ASSEMBLY 2 HOMOLOG, MITOCHONDRIAL"/>
    <property type="match status" value="1"/>
</dbReference>
<dbReference type="PANTHER" id="PTHR43011:SF1">
    <property type="entry name" value="IRON-SULFUR CLUSTER ASSEMBLY 2 HOMOLOG, MITOCHONDRIAL"/>
    <property type="match status" value="1"/>
</dbReference>
<dbReference type="Pfam" id="PF01521">
    <property type="entry name" value="Fe-S_biosyn"/>
    <property type="match status" value="1"/>
</dbReference>
<dbReference type="SUPFAM" id="SSF89360">
    <property type="entry name" value="HesB-like domain"/>
    <property type="match status" value="1"/>
</dbReference>
<dbReference type="PROSITE" id="PS01152">
    <property type="entry name" value="HESB"/>
    <property type="match status" value="1"/>
</dbReference>
<gene>
    <name evidence="1" type="primary">erpA</name>
    <name type="ordered locus">XOO0488</name>
</gene>
<feature type="chain" id="PRO_0000311580" description="Iron-sulfur cluster insertion protein ErpA">
    <location>
        <begin position="1"/>
        <end position="128"/>
    </location>
</feature>
<feature type="binding site" evidence="1">
    <location>
        <position position="56"/>
    </location>
    <ligand>
        <name>iron-sulfur cluster</name>
        <dbReference type="ChEBI" id="CHEBI:30408"/>
    </ligand>
</feature>
<feature type="binding site" evidence="1">
    <location>
        <position position="120"/>
    </location>
    <ligand>
        <name>iron-sulfur cluster</name>
        <dbReference type="ChEBI" id="CHEBI:30408"/>
    </ligand>
</feature>
<feature type="binding site" evidence="1">
    <location>
        <position position="122"/>
    </location>
    <ligand>
        <name>iron-sulfur cluster</name>
        <dbReference type="ChEBI" id="CHEBI:30408"/>
    </ligand>
</feature>
<reference key="1">
    <citation type="journal article" date="2005" name="Jpn. Agric. Res. Q.">
        <title>Genome sequence of Xanthomonas oryzae pv. oryzae suggests contribution of large numbers of effector genes and insertion sequences to its race diversity.</title>
        <authorList>
            <person name="Ochiai H."/>
            <person name="Inoue Y."/>
            <person name="Takeya M."/>
            <person name="Sasaki A."/>
            <person name="Kaku H."/>
        </authorList>
    </citation>
    <scope>NUCLEOTIDE SEQUENCE [LARGE SCALE GENOMIC DNA]</scope>
    <source>
        <strain>MAFF 311018</strain>
    </source>
</reference>